<gene>
    <name evidence="1" type="primary">prs</name>
    <name type="ordered locus">PF0236</name>
</gene>
<comment type="function">
    <text evidence="1">Involved in the biosynthesis of the central metabolite phospho-alpha-D-ribosyl-1-pyrophosphate (PRPP) via the transfer of pyrophosphoryl group from ATP to 1-hydroxyl of ribose-5-phosphate (Rib-5-P).</text>
</comment>
<comment type="catalytic activity">
    <reaction evidence="1">
        <text>D-ribose 5-phosphate + ATP = 5-phospho-alpha-D-ribose 1-diphosphate + AMP + H(+)</text>
        <dbReference type="Rhea" id="RHEA:15609"/>
        <dbReference type="ChEBI" id="CHEBI:15378"/>
        <dbReference type="ChEBI" id="CHEBI:30616"/>
        <dbReference type="ChEBI" id="CHEBI:58017"/>
        <dbReference type="ChEBI" id="CHEBI:78346"/>
        <dbReference type="ChEBI" id="CHEBI:456215"/>
        <dbReference type="EC" id="2.7.6.1"/>
    </reaction>
</comment>
<comment type="cofactor">
    <cofactor evidence="1">
        <name>Mg(2+)</name>
        <dbReference type="ChEBI" id="CHEBI:18420"/>
    </cofactor>
    <text evidence="1">Binds 2 Mg(2+) ions per subunit.</text>
</comment>
<comment type="pathway">
    <text evidence="1">Metabolic intermediate biosynthesis; 5-phospho-alpha-D-ribose 1-diphosphate biosynthesis; 5-phospho-alpha-D-ribose 1-diphosphate from D-ribose 5-phosphate (route I): step 1/1.</text>
</comment>
<comment type="subcellular location">
    <subcellularLocation>
        <location evidence="1">Cytoplasm</location>
    </subcellularLocation>
</comment>
<comment type="similarity">
    <text evidence="1">Belongs to the ribose-phosphate pyrophosphokinase family. Class III (archaeal) subfamily.</text>
</comment>
<sequence>MLVIGSGAKHLEGEIKEKAPITNVEIKKFPDGEKYVRILEKGDKAIVVQSTYKPQDEFLIEALLLGDALRENGYRKLKIVIPYMAYSRQDRVTKEGEPISIRAVLKMLGLYYDELYVMDIHNPKTLEFFPGRAENILPSKEIAEYFSDKLGEGIILAPDKGALERAKAIAEILGLEYSHFEKKRISPTEVQMTPVNIDVKGKNVLIVDDIISTGGTMIKATEILRKLGAEKVFVAATHGVFAEGAIERLSKAVDELAVTNTIPTPVSKISIVPEILNLL</sequence>
<reference key="1">
    <citation type="journal article" date="1999" name="Genetics">
        <title>Divergence of the hyperthermophilic archaea Pyrococcus furiosus and P. horikoshii inferred from complete genomic sequences.</title>
        <authorList>
            <person name="Maeder D.L."/>
            <person name="Weiss R.B."/>
            <person name="Dunn D.M."/>
            <person name="Cherry J.L."/>
            <person name="Gonzalez J.M."/>
            <person name="DiRuggiero J."/>
            <person name="Robb F.T."/>
        </authorList>
    </citation>
    <scope>NUCLEOTIDE SEQUENCE [LARGE SCALE GENOMIC DNA]</scope>
    <source>
        <strain>ATCC 43587 / DSM 3638 / JCM 8422 / Vc1</strain>
    </source>
</reference>
<proteinExistence type="inferred from homology"/>
<organism>
    <name type="scientific">Pyrococcus furiosus (strain ATCC 43587 / DSM 3638 / JCM 8422 / Vc1)</name>
    <dbReference type="NCBI Taxonomy" id="186497"/>
    <lineage>
        <taxon>Archaea</taxon>
        <taxon>Methanobacteriati</taxon>
        <taxon>Methanobacteriota</taxon>
        <taxon>Thermococci</taxon>
        <taxon>Thermococcales</taxon>
        <taxon>Thermococcaceae</taxon>
        <taxon>Pyrococcus</taxon>
    </lineage>
</organism>
<dbReference type="EC" id="2.7.6.1" evidence="1"/>
<dbReference type="EMBL" id="AE009950">
    <property type="protein sequence ID" value="AAL80360.1"/>
    <property type="molecule type" value="Genomic_DNA"/>
</dbReference>
<dbReference type="RefSeq" id="WP_011011351.1">
    <property type="nucleotide sequence ID" value="NZ_CP023154.1"/>
</dbReference>
<dbReference type="SMR" id="Q8U458"/>
<dbReference type="STRING" id="186497.PF0236"/>
<dbReference type="PaxDb" id="186497-PF0236"/>
<dbReference type="KEGG" id="pfu:PF0236"/>
<dbReference type="PATRIC" id="fig|186497.12.peg.246"/>
<dbReference type="eggNOG" id="arCOG00067">
    <property type="taxonomic scope" value="Archaea"/>
</dbReference>
<dbReference type="HOGENOM" id="CLU_033546_2_2_2"/>
<dbReference type="OrthoDB" id="371997at2157"/>
<dbReference type="PhylomeDB" id="Q8U458"/>
<dbReference type="UniPathway" id="UPA00087">
    <property type="reaction ID" value="UER00172"/>
</dbReference>
<dbReference type="Proteomes" id="UP000001013">
    <property type="component" value="Chromosome"/>
</dbReference>
<dbReference type="GO" id="GO:0005737">
    <property type="term" value="C:cytoplasm"/>
    <property type="evidence" value="ECO:0007669"/>
    <property type="project" value="UniProtKB-SubCell"/>
</dbReference>
<dbReference type="GO" id="GO:0002189">
    <property type="term" value="C:ribose phosphate diphosphokinase complex"/>
    <property type="evidence" value="ECO:0007669"/>
    <property type="project" value="TreeGrafter"/>
</dbReference>
<dbReference type="GO" id="GO:0005524">
    <property type="term" value="F:ATP binding"/>
    <property type="evidence" value="ECO:0007669"/>
    <property type="project" value="UniProtKB-KW"/>
</dbReference>
<dbReference type="GO" id="GO:0016301">
    <property type="term" value="F:kinase activity"/>
    <property type="evidence" value="ECO:0007669"/>
    <property type="project" value="UniProtKB-KW"/>
</dbReference>
<dbReference type="GO" id="GO:0000287">
    <property type="term" value="F:magnesium ion binding"/>
    <property type="evidence" value="ECO:0007669"/>
    <property type="project" value="UniProtKB-UniRule"/>
</dbReference>
<dbReference type="GO" id="GO:0004749">
    <property type="term" value="F:ribose phosphate diphosphokinase activity"/>
    <property type="evidence" value="ECO:0007669"/>
    <property type="project" value="UniProtKB-UniRule"/>
</dbReference>
<dbReference type="GO" id="GO:0006015">
    <property type="term" value="P:5-phosphoribose 1-diphosphate biosynthetic process"/>
    <property type="evidence" value="ECO:0007669"/>
    <property type="project" value="UniProtKB-UniRule"/>
</dbReference>
<dbReference type="GO" id="GO:0006164">
    <property type="term" value="P:purine nucleotide biosynthetic process"/>
    <property type="evidence" value="ECO:0007669"/>
    <property type="project" value="TreeGrafter"/>
</dbReference>
<dbReference type="CDD" id="cd06223">
    <property type="entry name" value="PRTases_typeI"/>
    <property type="match status" value="1"/>
</dbReference>
<dbReference type="FunFam" id="3.40.50.2020:FF:000074">
    <property type="entry name" value="Ribose-phosphate pyrophosphokinase"/>
    <property type="match status" value="1"/>
</dbReference>
<dbReference type="Gene3D" id="3.40.50.2020">
    <property type="match status" value="2"/>
</dbReference>
<dbReference type="HAMAP" id="MF_00583_A">
    <property type="entry name" value="RibP_PPkinase_A"/>
    <property type="match status" value="1"/>
</dbReference>
<dbReference type="InterPro" id="IPR029099">
    <property type="entry name" value="Pribosyltran_N"/>
</dbReference>
<dbReference type="InterPro" id="IPR000836">
    <property type="entry name" value="PRibTrfase_dom"/>
</dbReference>
<dbReference type="InterPro" id="IPR029057">
    <property type="entry name" value="PRTase-like"/>
</dbReference>
<dbReference type="InterPro" id="IPR005946">
    <property type="entry name" value="Rib-P_diPkinase"/>
</dbReference>
<dbReference type="InterPro" id="IPR037514">
    <property type="entry name" value="Rib-P_diPkinase_arc"/>
</dbReference>
<dbReference type="NCBIfam" id="NF002095">
    <property type="entry name" value="PRK00934.1"/>
    <property type="match status" value="1"/>
</dbReference>
<dbReference type="NCBIfam" id="TIGR01251">
    <property type="entry name" value="ribP_PPkin"/>
    <property type="match status" value="1"/>
</dbReference>
<dbReference type="PANTHER" id="PTHR10210">
    <property type="entry name" value="RIBOSE-PHOSPHATE DIPHOSPHOKINASE FAMILY MEMBER"/>
    <property type="match status" value="1"/>
</dbReference>
<dbReference type="PANTHER" id="PTHR10210:SF32">
    <property type="entry name" value="RIBOSE-PHOSPHATE PYROPHOSPHOKINASE 2"/>
    <property type="match status" value="1"/>
</dbReference>
<dbReference type="Pfam" id="PF00156">
    <property type="entry name" value="Pribosyltran"/>
    <property type="match status" value="1"/>
</dbReference>
<dbReference type="Pfam" id="PF13793">
    <property type="entry name" value="Pribosyltran_N"/>
    <property type="match status" value="1"/>
</dbReference>
<dbReference type="SMART" id="SM01400">
    <property type="entry name" value="Pribosyltran_N"/>
    <property type="match status" value="1"/>
</dbReference>
<dbReference type="SUPFAM" id="SSF53271">
    <property type="entry name" value="PRTase-like"/>
    <property type="match status" value="1"/>
</dbReference>
<evidence type="ECO:0000255" key="1">
    <source>
        <dbReference type="HAMAP-Rule" id="MF_00583"/>
    </source>
</evidence>
<protein>
    <recommendedName>
        <fullName evidence="1">Ribose-phosphate pyrophosphokinase</fullName>
        <shortName evidence="1">RPPK</shortName>
        <ecNumber evidence="1">2.7.6.1</ecNumber>
    </recommendedName>
    <alternativeName>
        <fullName evidence="1">5-phospho-D-ribosyl alpha-1-diphosphate synthase</fullName>
    </alternativeName>
    <alternativeName>
        <fullName evidence="1">Phosphoribosyl diphosphate synthase</fullName>
    </alternativeName>
    <alternativeName>
        <fullName evidence="1">Phosphoribosyl pyrophosphate synthase</fullName>
        <shortName evidence="1">P-Rib-PP synthase</shortName>
        <shortName evidence="1">PRPP synthase</shortName>
        <shortName evidence="1">PRPPase</shortName>
    </alternativeName>
</protein>
<name>KPRS_PYRFU</name>
<feature type="chain" id="PRO_0000141244" description="Ribose-phosphate pyrophosphokinase">
    <location>
        <begin position="1"/>
        <end position="279"/>
    </location>
</feature>
<feature type="active site" evidence="1">
    <location>
        <position position="182"/>
    </location>
</feature>
<feature type="binding site" evidence="1">
    <location>
        <begin position="31"/>
        <end position="33"/>
    </location>
    <ligand>
        <name>ATP</name>
        <dbReference type="ChEBI" id="CHEBI:30616"/>
    </ligand>
</feature>
<feature type="binding site" evidence="1">
    <location>
        <begin position="88"/>
        <end position="89"/>
    </location>
    <ligand>
        <name>ATP</name>
        <dbReference type="ChEBI" id="CHEBI:30616"/>
    </ligand>
</feature>
<feature type="binding site" evidence="1">
    <location>
        <position position="121"/>
    </location>
    <ligand>
        <name>Mg(2+)</name>
        <dbReference type="ChEBI" id="CHEBI:18420"/>
        <label>1</label>
    </ligand>
</feature>
<feature type="binding site" evidence="1">
    <location>
        <position position="159"/>
    </location>
    <ligand>
        <name>Mg(2+)</name>
        <dbReference type="ChEBI" id="CHEBI:18420"/>
        <label>2</label>
    </ligand>
</feature>
<feature type="binding site" evidence="1">
    <location>
        <position position="184"/>
    </location>
    <ligand>
        <name>D-ribose 5-phosphate</name>
        <dbReference type="ChEBI" id="CHEBI:78346"/>
    </ligand>
</feature>
<feature type="binding site" evidence="1">
    <location>
        <position position="208"/>
    </location>
    <ligand>
        <name>D-ribose 5-phosphate</name>
        <dbReference type="ChEBI" id="CHEBI:78346"/>
    </ligand>
</feature>
<feature type="binding site" evidence="1">
    <location>
        <begin position="212"/>
        <end position="216"/>
    </location>
    <ligand>
        <name>D-ribose 5-phosphate</name>
        <dbReference type="ChEBI" id="CHEBI:78346"/>
    </ligand>
</feature>
<keyword id="KW-0067">ATP-binding</keyword>
<keyword id="KW-0963">Cytoplasm</keyword>
<keyword id="KW-0418">Kinase</keyword>
<keyword id="KW-0460">Magnesium</keyword>
<keyword id="KW-0479">Metal-binding</keyword>
<keyword id="KW-0545">Nucleotide biosynthesis</keyword>
<keyword id="KW-0547">Nucleotide-binding</keyword>
<keyword id="KW-1185">Reference proteome</keyword>
<keyword id="KW-0808">Transferase</keyword>
<accession>Q8U458</accession>